<name>LEXA_LACAC</name>
<feature type="chain" id="PRO_0000170045" description="LexA repressor">
    <location>
        <begin position="1"/>
        <end position="208"/>
    </location>
</feature>
<feature type="DNA-binding region" description="H-T-H motif" evidence="1">
    <location>
        <begin position="30"/>
        <end position="50"/>
    </location>
</feature>
<feature type="active site" description="For autocatalytic cleavage activity" evidence="1">
    <location>
        <position position="129"/>
    </location>
</feature>
<feature type="active site" description="For autocatalytic cleavage activity" evidence="1">
    <location>
        <position position="167"/>
    </location>
</feature>
<feature type="site" description="Cleavage; by autolysis" evidence="1">
    <location>
        <begin position="93"/>
        <end position="94"/>
    </location>
</feature>
<dbReference type="EC" id="3.4.21.88" evidence="1"/>
<dbReference type="EMBL" id="CP000033">
    <property type="protein sequence ID" value="AAV43110.1"/>
    <property type="molecule type" value="Genomic_DNA"/>
</dbReference>
<dbReference type="RefSeq" id="WP_011254404.1">
    <property type="nucleotide sequence ID" value="NC_006814.3"/>
</dbReference>
<dbReference type="RefSeq" id="YP_194141.1">
    <property type="nucleotide sequence ID" value="NC_006814.3"/>
</dbReference>
<dbReference type="SMR" id="Q5FJL4"/>
<dbReference type="STRING" id="272621.LBA1280"/>
<dbReference type="MEROPS" id="S24.001"/>
<dbReference type="GeneID" id="93289633"/>
<dbReference type="KEGG" id="lac:LBA1280"/>
<dbReference type="PATRIC" id="fig|272621.13.peg.1212"/>
<dbReference type="eggNOG" id="COG1974">
    <property type="taxonomic scope" value="Bacteria"/>
</dbReference>
<dbReference type="HOGENOM" id="CLU_066192_45_1_9"/>
<dbReference type="OrthoDB" id="9802364at2"/>
<dbReference type="BioCyc" id="LACI272621:G1G49-1260-MONOMER"/>
<dbReference type="Proteomes" id="UP000006381">
    <property type="component" value="Chromosome"/>
</dbReference>
<dbReference type="GO" id="GO:0003677">
    <property type="term" value="F:DNA binding"/>
    <property type="evidence" value="ECO:0007669"/>
    <property type="project" value="UniProtKB-UniRule"/>
</dbReference>
<dbReference type="GO" id="GO:0004252">
    <property type="term" value="F:serine-type endopeptidase activity"/>
    <property type="evidence" value="ECO:0007669"/>
    <property type="project" value="UniProtKB-UniRule"/>
</dbReference>
<dbReference type="GO" id="GO:0006281">
    <property type="term" value="P:DNA repair"/>
    <property type="evidence" value="ECO:0007669"/>
    <property type="project" value="UniProtKB-UniRule"/>
</dbReference>
<dbReference type="GO" id="GO:0006260">
    <property type="term" value="P:DNA replication"/>
    <property type="evidence" value="ECO:0007669"/>
    <property type="project" value="UniProtKB-UniRule"/>
</dbReference>
<dbReference type="GO" id="GO:0045892">
    <property type="term" value="P:negative regulation of DNA-templated transcription"/>
    <property type="evidence" value="ECO:0007669"/>
    <property type="project" value="UniProtKB-UniRule"/>
</dbReference>
<dbReference type="GO" id="GO:0006508">
    <property type="term" value="P:proteolysis"/>
    <property type="evidence" value="ECO:0007669"/>
    <property type="project" value="InterPro"/>
</dbReference>
<dbReference type="GO" id="GO:0009432">
    <property type="term" value="P:SOS response"/>
    <property type="evidence" value="ECO:0007669"/>
    <property type="project" value="UniProtKB-UniRule"/>
</dbReference>
<dbReference type="CDD" id="cd00090">
    <property type="entry name" value="HTH_ARSR"/>
    <property type="match status" value="1"/>
</dbReference>
<dbReference type="CDD" id="cd06529">
    <property type="entry name" value="S24_LexA-like"/>
    <property type="match status" value="1"/>
</dbReference>
<dbReference type="FunFam" id="2.10.109.10:FF:000001">
    <property type="entry name" value="LexA repressor"/>
    <property type="match status" value="1"/>
</dbReference>
<dbReference type="Gene3D" id="2.10.109.10">
    <property type="entry name" value="Umud Fragment, subunit A"/>
    <property type="match status" value="1"/>
</dbReference>
<dbReference type="Gene3D" id="1.10.10.10">
    <property type="entry name" value="Winged helix-like DNA-binding domain superfamily/Winged helix DNA-binding domain"/>
    <property type="match status" value="1"/>
</dbReference>
<dbReference type="HAMAP" id="MF_00015">
    <property type="entry name" value="LexA"/>
    <property type="match status" value="1"/>
</dbReference>
<dbReference type="InterPro" id="IPR011991">
    <property type="entry name" value="ArsR-like_HTH"/>
</dbReference>
<dbReference type="InterPro" id="IPR006200">
    <property type="entry name" value="LexA"/>
</dbReference>
<dbReference type="InterPro" id="IPR039418">
    <property type="entry name" value="LexA-like"/>
</dbReference>
<dbReference type="InterPro" id="IPR036286">
    <property type="entry name" value="LexA/Signal_pep-like_sf"/>
</dbReference>
<dbReference type="InterPro" id="IPR006199">
    <property type="entry name" value="LexA_DNA-bd_dom"/>
</dbReference>
<dbReference type="InterPro" id="IPR050077">
    <property type="entry name" value="LexA_repressor"/>
</dbReference>
<dbReference type="InterPro" id="IPR006197">
    <property type="entry name" value="Peptidase_S24_LexA"/>
</dbReference>
<dbReference type="InterPro" id="IPR015927">
    <property type="entry name" value="Peptidase_S24_S26A/B/C"/>
</dbReference>
<dbReference type="InterPro" id="IPR036388">
    <property type="entry name" value="WH-like_DNA-bd_sf"/>
</dbReference>
<dbReference type="InterPro" id="IPR036390">
    <property type="entry name" value="WH_DNA-bd_sf"/>
</dbReference>
<dbReference type="NCBIfam" id="TIGR00498">
    <property type="entry name" value="lexA"/>
    <property type="match status" value="1"/>
</dbReference>
<dbReference type="PANTHER" id="PTHR33516">
    <property type="entry name" value="LEXA REPRESSOR"/>
    <property type="match status" value="1"/>
</dbReference>
<dbReference type="PANTHER" id="PTHR33516:SF2">
    <property type="entry name" value="LEXA REPRESSOR-RELATED"/>
    <property type="match status" value="1"/>
</dbReference>
<dbReference type="Pfam" id="PF01726">
    <property type="entry name" value="LexA_DNA_bind"/>
    <property type="match status" value="1"/>
</dbReference>
<dbReference type="Pfam" id="PF00717">
    <property type="entry name" value="Peptidase_S24"/>
    <property type="match status" value="1"/>
</dbReference>
<dbReference type="PRINTS" id="PR00726">
    <property type="entry name" value="LEXASERPTASE"/>
</dbReference>
<dbReference type="SUPFAM" id="SSF51306">
    <property type="entry name" value="LexA/Signal peptidase"/>
    <property type="match status" value="1"/>
</dbReference>
<dbReference type="SUPFAM" id="SSF46785">
    <property type="entry name" value="Winged helix' DNA-binding domain"/>
    <property type="match status" value="1"/>
</dbReference>
<reference key="1">
    <citation type="journal article" date="2005" name="Proc. Natl. Acad. Sci. U.S.A.">
        <title>Complete genome sequence of the probiotic lactic acid bacterium Lactobacillus acidophilus NCFM.</title>
        <authorList>
            <person name="Altermann E."/>
            <person name="Russell W.M."/>
            <person name="Azcarate-Peril M.A."/>
            <person name="Barrangou R."/>
            <person name="Buck B.L."/>
            <person name="McAuliffe O."/>
            <person name="Souther N."/>
            <person name="Dobson A."/>
            <person name="Duong T."/>
            <person name="Callanan M."/>
            <person name="Lick S."/>
            <person name="Hamrick A."/>
            <person name="Cano R."/>
            <person name="Klaenhammer T.R."/>
        </authorList>
    </citation>
    <scope>NUCLEOTIDE SEQUENCE [LARGE SCALE GENOMIC DNA]</scope>
    <source>
        <strain>ATCC 700396 / NCK56 / N2 / NCFM</strain>
    </source>
</reference>
<proteinExistence type="inferred from homology"/>
<organism>
    <name type="scientific">Lactobacillus acidophilus (strain ATCC 700396 / NCK56 / N2 / NCFM)</name>
    <dbReference type="NCBI Taxonomy" id="272621"/>
    <lineage>
        <taxon>Bacteria</taxon>
        <taxon>Bacillati</taxon>
        <taxon>Bacillota</taxon>
        <taxon>Bacilli</taxon>
        <taxon>Lactobacillales</taxon>
        <taxon>Lactobacillaceae</taxon>
        <taxon>Lactobacillus</taxon>
    </lineage>
</organism>
<evidence type="ECO:0000255" key="1">
    <source>
        <dbReference type="HAMAP-Rule" id="MF_00015"/>
    </source>
</evidence>
<protein>
    <recommendedName>
        <fullName evidence="1">LexA repressor</fullName>
        <ecNumber evidence="1">3.4.21.88</ecNumber>
    </recommendedName>
</protein>
<comment type="function">
    <text evidence="1">Represses a number of genes involved in the response to DNA damage (SOS response), including recA and lexA. In the presence of single-stranded DNA, RecA interacts with LexA causing an autocatalytic cleavage which disrupts the DNA-binding part of LexA, leading to derepression of the SOS regulon and eventually DNA repair.</text>
</comment>
<comment type="catalytic activity">
    <reaction evidence="1">
        <text>Hydrolysis of Ala-|-Gly bond in repressor LexA.</text>
        <dbReference type="EC" id="3.4.21.88"/>
    </reaction>
</comment>
<comment type="subunit">
    <text evidence="1">Homodimer.</text>
</comment>
<comment type="similarity">
    <text evidence="1">Belongs to the peptidase S24 family.</text>
</comment>
<gene>
    <name evidence="1" type="primary">lexA</name>
    <name type="ordered locus">LBA1280</name>
</gene>
<sequence length="208" mass="23015">MSRKNSDTKQLEILRYIYDTVENRGFPPTVREICAAVGLSSTSTVHGHLSRLERKGFLIKDATKPRALEITAEGKTELGIKPKEIPVVGVVTAGQPILAVEDISEYFPLPPDLESDAGELFMLKVHGNSMIKAGILNGDNVIVRKQSTANNGEIVVAMTDENEATVKRFFKEDDHYRLQPENDTMAPIILQQVSILGKVVGLYRNNIQ</sequence>
<keyword id="KW-0068">Autocatalytic cleavage</keyword>
<keyword id="KW-0227">DNA damage</keyword>
<keyword id="KW-0234">DNA repair</keyword>
<keyword id="KW-0235">DNA replication</keyword>
<keyword id="KW-0238">DNA-binding</keyword>
<keyword id="KW-0378">Hydrolase</keyword>
<keyword id="KW-1185">Reference proteome</keyword>
<keyword id="KW-0678">Repressor</keyword>
<keyword id="KW-0742">SOS response</keyword>
<keyword id="KW-0804">Transcription</keyword>
<keyword id="KW-0805">Transcription regulation</keyword>
<accession>Q5FJL4</accession>